<gene>
    <name evidence="1" type="primary">MDM12</name>
    <name type="ORF">BDCG_04954</name>
</gene>
<keyword id="KW-0256">Endoplasmic reticulum</keyword>
<keyword id="KW-0445">Lipid transport</keyword>
<keyword id="KW-0446">Lipid-binding</keyword>
<keyword id="KW-0472">Membrane</keyword>
<keyword id="KW-0496">Mitochondrion</keyword>
<keyword id="KW-1000">Mitochondrion outer membrane</keyword>
<keyword id="KW-0813">Transport</keyword>
<accession>C5GK63</accession>
<feature type="chain" id="PRO_0000384265" description="Mitochondrial distribution and morphology protein 12">
    <location>
        <begin position="1"/>
        <end position="434"/>
    </location>
</feature>
<feature type="domain" description="SMP-LTD" evidence="1">
    <location>
        <begin position="1"/>
        <end position="434"/>
    </location>
</feature>
<feature type="region of interest" description="Disordered" evidence="2">
    <location>
        <begin position="70"/>
        <end position="141"/>
    </location>
</feature>
<feature type="region of interest" description="Disordered" evidence="2">
    <location>
        <begin position="181"/>
        <end position="277"/>
    </location>
</feature>
<feature type="compositionally biased region" description="Acidic residues" evidence="2">
    <location>
        <begin position="70"/>
        <end position="83"/>
    </location>
</feature>
<feature type="compositionally biased region" description="Basic and acidic residues" evidence="2">
    <location>
        <begin position="86"/>
        <end position="97"/>
    </location>
</feature>
<feature type="compositionally biased region" description="Polar residues" evidence="2">
    <location>
        <begin position="215"/>
        <end position="237"/>
    </location>
</feature>
<organism>
    <name type="scientific">Ajellomyces dermatitidis (strain ER-3 / ATCC MYA-2586)</name>
    <name type="common">Blastomyces dermatitidis</name>
    <dbReference type="NCBI Taxonomy" id="559297"/>
    <lineage>
        <taxon>Eukaryota</taxon>
        <taxon>Fungi</taxon>
        <taxon>Dikarya</taxon>
        <taxon>Ascomycota</taxon>
        <taxon>Pezizomycotina</taxon>
        <taxon>Eurotiomycetes</taxon>
        <taxon>Eurotiomycetidae</taxon>
        <taxon>Onygenales</taxon>
        <taxon>Ajellomycetaceae</taxon>
        <taxon>Blastomyces</taxon>
    </lineage>
</organism>
<sequence>MSIDIDWERATSGPDGELLAERIRSFIHDKFQQIVLPRFIRSVQVTSFNFGTIPPELEIRDLCDPFPDFYEEDDNENFSESSEEQSPTREPVDRYGSKVESWQANSPGSLEDHMQGRMGFNGPLRMPPGEENTGISPLRSPMNFGDINPYLFPRSRTPGIPGGTSNLGYYMPLSGLSGSQTPLGTVARGSPFSGGWPDVHGARPSRRRSEVEPDSAQSRPSTANTGNTLLSRGSMSSGDPRHSHHSQGVPGSDHGQVLEPNMPPTSSDPPLDDLPPRRMREQKAEDFQVFCRTKYAGNISLSLTAEILLDYPMPSFVGLPLKLNITGLTFDAVAVIAYIRRRIHFCFLSPEDADALIGPEIGSGGGEDTLEPNSPRRKPLSLLREIRVESEIGRKENGKQALKNVGKVEKFVLEQVRRIFEEEFVYPSFWTFLV</sequence>
<proteinExistence type="inferred from homology"/>
<name>MDM12_AJEDR</name>
<reference key="1">
    <citation type="journal article" date="2015" name="PLoS Genet.">
        <title>The dynamic genome and transcriptome of the human fungal pathogen Blastomyces and close relative Emmonsia.</title>
        <authorList>
            <person name="Munoz J.F."/>
            <person name="Gauthier G.M."/>
            <person name="Desjardins C.A."/>
            <person name="Gallo J.E."/>
            <person name="Holder J."/>
            <person name="Sullivan T.D."/>
            <person name="Marty A.J."/>
            <person name="Carmen J.C."/>
            <person name="Chen Z."/>
            <person name="Ding L."/>
            <person name="Gujja S."/>
            <person name="Magrini V."/>
            <person name="Misas E."/>
            <person name="Mitreva M."/>
            <person name="Priest M."/>
            <person name="Saif S."/>
            <person name="Whiston E.A."/>
            <person name="Young S."/>
            <person name="Zeng Q."/>
            <person name="Goldman W.E."/>
            <person name="Mardis E.R."/>
            <person name="Taylor J.W."/>
            <person name="McEwen J.G."/>
            <person name="Clay O.K."/>
            <person name="Klein B.S."/>
            <person name="Cuomo C.A."/>
        </authorList>
    </citation>
    <scope>NUCLEOTIDE SEQUENCE [LARGE SCALE GENOMIC DNA]</scope>
    <source>
        <strain>ER-3 / ATCC MYA-2586</strain>
    </source>
</reference>
<comment type="function">
    <text evidence="1">Component of the ERMES/MDM complex, which serves as a molecular tether to connect the endoplasmic reticulum (ER) and mitochondria. Components of this complex are involved in the control of mitochondrial shape and protein biogenesis, and function in nonvesicular lipid trafficking between the ER and mitochondria. MDM12 is required for the interaction of the ER-resident membrane protein MMM1 and the outer mitochondrial membrane-resident beta-barrel protein MDM10. The MDM12-MMM1 subcomplex functions in the major beta-barrel assembly pathway that is responsible for biogenesis of all mitochondrial outer membrane beta-barrel proteins, and acts in a late step after the SAM complex. The MDM10-MDM12-MMM1 subcomplex further acts in the TOM40-specific pathway after the action of the MDM12-MMM1 complex. Essential for establishing and maintaining the structure of mitochondria and maintenance of mtDNA nucleoids.</text>
</comment>
<comment type="subunit">
    <text evidence="1">Component of the ER-mitochondria encounter structure (ERMES) or MDM complex, composed of MMM1, MDM10, MDM12 and MDM34. A MMM1 homodimer associates with one molecule of MDM12 on each side in a pairwise head-to-tail manner, and the SMP-LTD domains of MMM1 and MDM12 generate a continuous hydrophobic tunnel for phospholipid trafficking.</text>
</comment>
<comment type="subcellular location">
    <subcellularLocation>
        <location evidence="1">Mitochondrion outer membrane</location>
        <topology evidence="1">Peripheral membrane protein</topology>
        <orientation evidence="1">Cytoplasmic side</orientation>
    </subcellularLocation>
    <subcellularLocation>
        <location evidence="1">Endoplasmic reticulum membrane</location>
        <topology evidence="1">Peripheral membrane protein</topology>
        <orientation evidence="1">Cytoplasmic side</orientation>
    </subcellularLocation>
    <text evidence="1">The ERMES/MDM complex localizes to a few discrete foci (around 10 per single cell), that represent mitochondria-endoplasmic reticulum junctions. These foci are often found next to mtDNA nucleoids.</text>
</comment>
<comment type="domain">
    <text evidence="1">The SMP-LTD domain is a barrel-like domain that can bind various types of glycerophospholipids in its interior and mediate their transfer between two adjacent bilayers.</text>
</comment>
<comment type="similarity">
    <text evidence="1">Belongs to the MDM12 family.</text>
</comment>
<protein>
    <recommendedName>
        <fullName evidence="1">Mitochondrial distribution and morphology protein 12</fullName>
    </recommendedName>
    <alternativeName>
        <fullName evidence="1">Mitochondrial inheritance component MDM12</fullName>
    </alternativeName>
</protein>
<dbReference type="EMBL" id="EQ999977">
    <property type="protein sequence ID" value="EEQ89834.1"/>
    <property type="molecule type" value="Genomic_DNA"/>
</dbReference>
<dbReference type="STRING" id="559297.C5GK63"/>
<dbReference type="VEuPathDB" id="FungiDB:BDCG_04954"/>
<dbReference type="eggNOG" id="ENOG502S1MJ">
    <property type="taxonomic scope" value="Eukaryota"/>
</dbReference>
<dbReference type="HOGENOM" id="CLU_026794_0_0_1"/>
<dbReference type="OMA" id="KRAHFCF"/>
<dbReference type="GO" id="GO:0005789">
    <property type="term" value="C:endoplasmic reticulum membrane"/>
    <property type="evidence" value="ECO:0007669"/>
    <property type="project" value="UniProtKB-SubCell"/>
</dbReference>
<dbReference type="GO" id="GO:0032865">
    <property type="term" value="C:ERMES complex"/>
    <property type="evidence" value="ECO:0007669"/>
    <property type="project" value="UniProtKB-UniRule"/>
</dbReference>
<dbReference type="GO" id="GO:0008289">
    <property type="term" value="F:lipid binding"/>
    <property type="evidence" value="ECO:0007669"/>
    <property type="project" value="UniProtKB-KW"/>
</dbReference>
<dbReference type="GO" id="GO:0000002">
    <property type="term" value="P:mitochondrial genome maintenance"/>
    <property type="evidence" value="ECO:0007669"/>
    <property type="project" value="UniProtKB-UniRule"/>
</dbReference>
<dbReference type="GO" id="GO:1990456">
    <property type="term" value="P:mitochondrion-endoplasmic reticulum membrane tethering"/>
    <property type="evidence" value="ECO:0007669"/>
    <property type="project" value="TreeGrafter"/>
</dbReference>
<dbReference type="GO" id="GO:0015914">
    <property type="term" value="P:phospholipid transport"/>
    <property type="evidence" value="ECO:0007669"/>
    <property type="project" value="TreeGrafter"/>
</dbReference>
<dbReference type="GO" id="GO:0045040">
    <property type="term" value="P:protein insertion into mitochondrial outer membrane"/>
    <property type="evidence" value="ECO:0007669"/>
    <property type="project" value="UniProtKB-UniRule"/>
</dbReference>
<dbReference type="CDD" id="cd21672">
    <property type="entry name" value="SMP_Mdm12"/>
    <property type="match status" value="1"/>
</dbReference>
<dbReference type="HAMAP" id="MF_03104">
    <property type="entry name" value="Mdm12"/>
    <property type="match status" value="1"/>
</dbReference>
<dbReference type="InterPro" id="IPR027532">
    <property type="entry name" value="Mdm12"/>
</dbReference>
<dbReference type="InterPro" id="IPR019411">
    <property type="entry name" value="MMM1_dom"/>
</dbReference>
<dbReference type="InterPro" id="IPR031468">
    <property type="entry name" value="SMP_LBD"/>
</dbReference>
<dbReference type="PANTHER" id="PTHR28204">
    <property type="entry name" value="MITOCHONDRIAL DISTRIBUTION AND MORPHOLOGY PROTEIN 12"/>
    <property type="match status" value="1"/>
</dbReference>
<dbReference type="PANTHER" id="PTHR28204:SF1">
    <property type="entry name" value="MITOCHONDRIAL DISTRIBUTION AND MORPHOLOGY PROTEIN 12"/>
    <property type="match status" value="1"/>
</dbReference>
<dbReference type="Pfam" id="PF10296">
    <property type="entry name" value="MMM1"/>
    <property type="match status" value="1"/>
</dbReference>
<dbReference type="PROSITE" id="PS51847">
    <property type="entry name" value="SMP"/>
    <property type="match status" value="1"/>
</dbReference>
<evidence type="ECO:0000255" key="1">
    <source>
        <dbReference type="HAMAP-Rule" id="MF_03104"/>
    </source>
</evidence>
<evidence type="ECO:0000256" key="2">
    <source>
        <dbReference type="SAM" id="MobiDB-lite"/>
    </source>
</evidence>